<organism>
    <name type="scientific">Citrobacter koseri (strain ATCC BAA-895 / CDC 4225-83 / SGSC4696)</name>
    <dbReference type="NCBI Taxonomy" id="290338"/>
    <lineage>
        <taxon>Bacteria</taxon>
        <taxon>Pseudomonadati</taxon>
        <taxon>Pseudomonadota</taxon>
        <taxon>Gammaproteobacteria</taxon>
        <taxon>Enterobacterales</taxon>
        <taxon>Enterobacteriaceae</taxon>
        <taxon>Citrobacter</taxon>
    </lineage>
</organism>
<sequence length="417" mass="44265">MFRRLLIATIIGILAALAVAGFRHAMLVLEWLFLRNDTGSLVNAATNLSPWRRLITPAVGGLAAGALLWGWQKMNQQRPHAPTDYMEALQTDGQFDYGASLVKSLASLLVVASGSAIGREGAMILLAALAASCFAQRCTPREEWKLWIACGAAAGMASAYHAPLAGSLFIAEILFGTLMLASLGPVVISAVVALLTTHLLSGGNALLYTVHLSLDLHVREYAMIISTGLVAGVCGPLFMWLMTTTHNGFIRLKLSPPWQLALGGFIVGLLSLLTPAVWGNGYSVVQSFLLSPPLLSVIAGIFICKLLAVLASSGSGAPGGVFTPTLFIGLSIGMLYGRMWGFWLPGADEMAILLGLTGMATLLAATTHAPMMSTLMICEMTGEYRLLPGLLIACVVASVLSRTLREDSVYRQHTAEH</sequence>
<proteinExistence type="inferred from homology"/>
<dbReference type="EMBL" id="CP000822">
    <property type="protein sequence ID" value="ABV12722.1"/>
    <property type="molecule type" value="Genomic_DNA"/>
</dbReference>
<dbReference type="SMR" id="A8AGW0"/>
<dbReference type="STRING" id="290338.CKO_01590"/>
<dbReference type="TCDB" id="2.A.49.5.4">
    <property type="family name" value="the chloride carrier/channel (clc) family"/>
</dbReference>
<dbReference type="KEGG" id="cko:CKO_01590"/>
<dbReference type="HOGENOM" id="CLU_015263_5_2_6"/>
<dbReference type="Proteomes" id="UP000008148">
    <property type="component" value="Chromosome"/>
</dbReference>
<dbReference type="GO" id="GO:0034707">
    <property type="term" value="C:chloride channel complex"/>
    <property type="evidence" value="ECO:0007669"/>
    <property type="project" value="UniProtKB-KW"/>
</dbReference>
<dbReference type="GO" id="GO:0005886">
    <property type="term" value="C:plasma membrane"/>
    <property type="evidence" value="ECO:0007669"/>
    <property type="project" value="UniProtKB-SubCell"/>
</dbReference>
<dbReference type="GO" id="GO:0005247">
    <property type="term" value="F:voltage-gated chloride channel activity"/>
    <property type="evidence" value="ECO:0007669"/>
    <property type="project" value="UniProtKB-UniRule"/>
</dbReference>
<dbReference type="GO" id="GO:0010447">
    <property type="term" value="P:response to acidic pH"/>
    <property type="evidence" value="ECO:0007669"/>
    <property type="project" value="InterPro"/>
</dbReference>
<dbReference type="CDD" id="cd00400">
    <property type="entry name" value="Voltage_gated_ClC"/>
    <property type="match status" value="1"/>
</dbReference>
<dbReference type="FunFam" id="1.10.3080.10:FF:000010">
    <property type="entry name" value="Voltage-gated ClC-type chloride channel ClcB"/>
    <property type="match status" value="1"/>
</dbReference>
<dbReference type="Gene3D" id="1.10.3080.10">
    <property type="entry name" value="Clc chloride channel"/>
    <property type="match status" value="1"/>
</dbReference>
<dbReference type="HAMAP" id="MF_01203">
    <property type="entry name" value="CLC_ClcB"/>
    <property type="match status" value="1"/>
</dbReference>
<dbReference type="InterPro" id="IPR014743">
    <property type="entry name" value="Cl-channel_core"/>
</dbReference>
<dbReference type="InterPro" id="IPR023790">
    <property type="entry name" value="Cl-channel_volt-gated_ClcB"/>
</dbReference>
<dbReference type="InterPro" id="IPR001807">
    <property type="entry name" value="ClC"/>
</dbReference>
<dbReference type="InterPro" id="IPR050368">
    <property type="entry name" value="ClC-type_chloride_channel"/>
</dbReference>
<dbReference type="NCBIfam" id="NF002437">
    <property type="entry name" value="PRK01610.1"/>
    <property type="match status" value="1"/>
</dbReference>
<dbReference type="PANTHER" id="PTHR43427">
    <property type="entry name" value="CHLORIDE CHANNEL PROTEIN CLC-E"/>
    <property type="match status" value="1"/>
</dbReference>
<dbReference type="PANTHER" id="PTHR43427:SF6">
    <property type="entry name" value="CHLORIDE CHANNEL PROTEIN CLC-E"/>
    <property type="match status" value="1"/>
</dbReference>
<dbReference type="Pfam" id="PF00654">
    <property type="entry name" value="Voltage_CLC"/>
    <property type="match status" value="1"/>
</dbReference>
<dbReference type="PRINTS" id="PR00762">
    <property type="entry name" value="CLCHANNEL"/>
</dbReference>
<dbReference type="SUPFAM" id="SSF81340">
    <property type="entry name" value="Clc chloride channel"/>
    <property type="match status" value="1"/>
</dbReference>
<name>CLCB_CITK8</name>
<gene>
    <name evidence="1" type="primary">clcB</name>
    <name type="ordered locus">CKO_01590</name>
</gene>
<accession>A8AGW0</accession>
<reference key="1">
    <citation type="submission" date="2007-08" db="EMBL/GenBank/DDBJ databases">
        <authorList>
            <consortium name="The Citrobacter koseri Genome Sequencing Project"/>
            <person name="McClelland M."/>
            <person name="Sanderson E.K."/>
            <person name="Porwollik S."/>
            <person name="Spieth J."/>
            <person name="Clifton W.S."/>
            <person name="Latreille P."/>
            <person name="Courtney L."/>
            <person name="Wang C."/>
            <person name="Pepin K."/>
            <person name="Bhonagiri V."/>
            <person name="Nash W."/>
            <person name="Johnson M."/>
            <person name="Thiruvilangam P."/>
            <person name="Wilson R."/>
        </authorList>
    </citation>
    <scope>NUCLEOTIDE SEQUENCE [LARGE SCALE GENOMIC DNA]</scope>
    <source>
        <strain>ATCC BAA-895 / CDC 4225-83 / SGSC4696</strain>
    </source>
</reference>
<evidence type="ECO:0000255" key="1">
    <source>
        <dbReference type="HAMAP-Rule" id="MF_01203"/>
    </source>
</evidence>
<keyword id="KW-0997">Cell inner membrane</keyword>
<keyword id="KW-1003">Cell membrane</keyword>
<keyword id="KW-0868">Chloride</keyword>
<keyword id="KW-0869">Chloride channel</keyword>
<keyword id="KW-0407">Ion channel</keyword>
<keyword id="KW-0406">Ion transport</keyword>
<keyword id="KW-0472">Membrane</keyword>
<keyword id="KW-1185">Reference proteome</keyword>
<keyword id="KW-0812">Transmembrane</keyword>
<keyword id="KW-1133">Transmembrane helix</keyword>
<keyword id="KW-0813">Transport</keyword>
<keyword id="KW-0851">Voltage-gated channel</keyword>
<feature type="chain" id="PRO_1000066130" description="Voltage-gated ClC-type chloride channel ClcB">
    <location>
        <begin position="1"/>
        <end position="417"/>
    </location>
</feature>
<feature type="transmembrane region" description="Helical" evidence="1">
    <location>
        <begin position="5"/>
        <end position="25"/>
    </location>
</feature>
<feature type="transmembrane region" description="Helical" evidence="1">
    <location>
        <begin position="54"/>
        <end position="74"/>
    </location>
</feature>
<feature type="transmembrane region" description="Helical" evidence="1">
    <location>
        <begin position="146"/>
        <end position="166"/>
    </location>
</feature>
<feature type="transmembrane region" description="Helical" evidence="1">
    <location>
        <begin position="168"/>
        <end position="188"/>
    </location>
</feature>
<feature type="transmembrane region" description="Helical" evidence="1">
    <location>
        <begin position="190"/>
        <end position="210"/>
    </location>
</feature>
<feature type="transmembrane region" description="Helical" evidence="1">
    <location>
        <begin position="222"/>
        <end position="242"/>
    </location>
</feature>
<feature type="transmembrane region" description="Helical" evidence="1">
    <location>
        <begin position="258"/>
        <end position="278"/>
    </location>
</feature>
<feature type="transmembrane region" description="Helical" evidence="1">
    <location>
        <begin position="288"/>
        <end position="308"/>
    </location>
</feature>
<feature type="transmembrane region" description="Helical" evidence="1">
    <location>
        <begin position="316"/>
        <end position="336"/>
    </location>
</feature>
<feature type="transmembrane region" description="Helical" evidence="1">
    <location>
        <begin position="339"/>
        <end position="359"/>
    </location>
</feature>
<feature type="transmembrane region" description="Helical" evidence="1">
    <location>
        <begin position="380"/>
        <end position="400"/>
    </location>
</feature>
<protein>
    <recommendedName>
        <fullName evidence="1">Voltage-gated ClC-type chloride channel ClcB</fullName>
    </recommendedName>
</protein>
<comment type="function">
    <text evidence="1">Probably acts as an electrical shunt for an outwardly-directed proton pump that is linked to amino acid decarboxylation, as part of the extreme acid resistance (XAR) response.</text>
</comment>
<comment type="subcellular location">
    <subcellularLocation>
        <location evidence="1">Cell inner membrane</location>
        <topology evidence="1">Multi-pass membrane protein</topology>
    </subcellularLocation>
</comment>
<comment type="similarity">
    <text evidence="1">Belongs to the chloride channel (TC 2.A.49) family. ClcB subfamily.</text>
</comment>